<gene>
    <name type="primary">NHERF1</name>
    <name type="synonym">NHERF</name>
    <name type="synonym">SLC9A3R1</name>
    <name type="ORF">QtsA-18078</name>
</gene>
<reference key="1">
    <citation type="submission" date="2005-06" db="EMBL/GenBank/DDBJ databases">
        <title>DNA sequences of macaque genes expressed in brain or testis and its evolutionary implications.</title>
        <authorList>
            <consortium name="International consortium for macaque cDNA sequencing and analysis"/>
        </authorList>
    </citation>
    <scope>NUCLEOTIDE SEQUENCE [LARGE SCALE MRNA]</scope>
    <source>
        <tissue>Testis</tissue>
    </source>
</reference>
<feature type="initiator methionine" description="Removed" evidence="2">
    <location>
        <position position="1"/>
    </location>
</feature>
<feature type="chain" id="PRO_0000301265" description="Na(+)/H(+) exchange regulatory cofactor NHE-RF1">
    <location>
        <begin position="2"/>
        <end position="358"/>
    </location>
</feature>
<feature type="domain" description="PDZ 1" evidence="5">
    <location>
        <begin position="14"/>
        <end position="94"/>
    </location>
</feature>
<feature type="domain" description="PDZ 2" evidence="5">
    <location>
        <begin position="154"/>
        <end position="234"/>
    </location>
</feature>
<feature type="region of interest" description="Disordered" evidence="6">
    <location>
        <begin position="114"/>
        <end position="192"/>
    </location>
</feature>
<feature type="region of interest" description="Disordered" evidence="6">
    <location>
        <begin position="269"/>
        <end position="358"/>
    </location>
</feature>
<feature type="compositionally biased region" description="Low complexity" evidence="6">
    <location>
        <begin position="114"/>
        <end position="134"/>
    </location>
</feature>
<feature type="compositionally biased region" description="Basic and acidic residues" evidence="6">
    <location>
        <begin position="135"/>
        <end position="149"/>
    </location>
</feature>
<feature type="compositionally biased region" description="Polar residues" evidence="6">
    <location>
        <begin position="287"/>
        <end position="306"/>
    </location>
</feature>
<feature type="compositionally biased region" description="Low complexity" evidence="6">
    <location>
        <begin position="307"/>
        <end position="319"/>
    </location>
</feature>
<feature type="compositionally biased region" description="Basic and acidic residues" evidence="6">
    <location>
        <begin position="348"/>
        <end position="358"/>
    </location>
</feature>
<feature type="modified residue" description="N-acetylserine" evidence="2">
    <location>
        <position position="2"/>
    </location>
</feature>
<feature type="modified residue" description="Phosphoserine" evidence="2">
    <location>
        <position position="2"/>
    </location>
</feature>
<feature type="modified residue" description="Phosphoserine" evidence="2">
    <location>
        <position position="46"/>
    </location>
</feature>
<feature type="modified residue" description="Phosphoserine" evidence="2">
    <location>
        <position position="162"/>
    </location>
</feature>
<feature type="modified residue" description="Phosphoserine" evidence="2">
    <location>
        <position position="269"/>
    </location>
</feature>
<feature type="modified residue" description="Phosphoserine" evidence="2">
    <location>
        <position position="280"/>
    </location>
</feature>
<feature type="modified residue" description="Phosphoserine" evidence="4">
    <location>
        <position position="290"/>
    </location>
</feature>
<feature type="modified residue" description="Phosphoserine" evidence="3">
    <location>
        <position position="291"/>
    </location>
</feature>
<feature type="modified residue" description="Phosphothreonine" evidence="3">
    <location>
        <position position="293"/>
    </location>
</feature>
<feature type="modified residue" description="Phosphoserine" evidence="2">
    <location>
        <position position="294"/>
    </location>
</feature>
<feature type="modified residue" description="Phosphoserine" evidence="3">
    <location>
        <position position="299"/>
    </location>
</feature>
<feature type="modified residue" description="Phosphoserine" evidence="3">
    <location>
        <position position="302"/>
    </location>
</feature>
<sequence length="358" mass="38837">MSADAAAGAPLPRLCCLEKGPNGYGFHLHGEKGKLGQYIRLVEPGSPAEKAGLLAGDRLVEVNGENVEKETHQQVVSRIRAALNAVRLLVVDPETDEQLQKLGVQVREELLRAQETPGQAEPAAAAEAQGAGNENEPREADKSHPEQRKLRPRLCTMKKGPSGYGFNLHSDKSKPGQFIRSVDPDSPAEASGLRAQDRIVEVNGVCMEGKQHGDVVSAIRAGGDETKLLVVDRETDEFFKKCKVTPSQEHLNGPLPEPFTNGEIQKENSREALAEAASESPRPTLVRSASSDTSEELNSQDSPPKQDSTAPSSTSSSDPILDFNISLAMAKERAHQKRSSKRAPQMDWSKKNELFSNL</sequence>
<evidence type="ECO:0000250" key="1"/>
<evidence type="ECO:0000250" key="2">
    <source>
        <dbReference type="UniProtKB" id="O14745"/>
    </source>
</evidence>
<evidence type="ECO:0000250" key="3">
    <source>
        <dbReference type="UniProtKB" id="P70441"/>
    </source>
</evidence>
<evidence type="ECO:0000250" key="4">
    <source>
        <dbReference type="UniProtKB" id="Q28619"/>
    </source>
</evidence>
<evidence type="ECO:0000255" key="5">
    <source>
        <dbReference type="PROSITE-ProRule" id="PRU00143"/>
    </source>
</evidence>
<evidence type="ECO:0000256" key="6">
    <source>
        <dbReference type="SAM" id="MobiDB-lite"/>
    </source>
</evidence>
<organism>
    <name type="scientific">Macaca fascicularis</name>
    <name type="common">Crab-eating macaque</name>
    <name type="synonym">Cynomolgus monkey</name>
    <dbReference type="NCBI Taxonomy" id="9541"/>
    <lineage>
        <taxon>Eukaryota</taxon>
        <taxon>Metazoa</taxon>
        <taxon>Chordata</taxon>
        <taxon>Craniata</taxon>
        <taxon>Vertebrata</taxon>
        <taxon>Euteleostomi</taxon>
        <taxon>Mammalia</taxon>
        <taxon>Eutheria</taxon>
        <taxon>Euarchontoglires</taxon>
        <taxon>Primates</taxon>
        <taxon>Haplorrhini</taxon>
        <taxon>Catarrhini</taxon>
        <taxon>Cercopithecidae</taxon>
        <taxon>Cercopithecinae</taxon>
        <taxon>Macaca</taxon>
    </lineage>
</organism>
<name>NHRF1_MACFA</name>
<comment type="function">
    <text evidence="1">Scaffold protein that connects plasma membrane proteins with members of the ezrin/moesin/radixin family and thereby helps to link them to the actin cytoskeleton and to regulate their surface expression. Necessary for recycling of internalized ADRB2. Was first known to play a role in the regulation of the activity and subcellular location of SLC9A3. Necessary for cAMP-mediated phosphorylation and inhibition of SLC9A3. Involved in sperm capacitation. May participate in the regulation of the chloride and bicarbonate homeostasis in spermatozoa. May enhance Wnt signaling. May participate in HTR4 targeting to microvilli (By similarity). Involved in the regulation of phosphate reabsorption in the renal proximal tubules (By similarity).</text>
</comment>
<comment type="subunit">
    <text evidence="2 3">Homodimer, and heterodimer with NHERF2. Binds the N-termini of EZR, RDX and MSN. Binds the C-termini of PDGFRA, PDGFRB, ADRB2, NOS2 and CFTR. Binds ARHGAP17, EPI64, RACK1, OPRK1, GNAQ, CTNNB1 and PLCB3. Binds PDZK1 (By similarity). Interacts with CLCN3. Binds the C-terminus of PAG1. In resting T-cells, part of a PAG1-NHERF1-MSN complex which is disrupted upon TCR activation. Forms a complex with CFTR and SLC4A7. Forms a complex with SLC4A7 and ATP6V1B1. Interacts with TRPC4 (via the PDZ-binding domain). Directly interacts with HTR4 (By similarity). Interacts (via the PDZ 1 domain) with PODXL (via the C-terminal PDZ-binding motif DTHL); interaction is not detected in glomerular epithelium cells. Interacts (via the PDZ 1 domain) with PODXL (via the C-terminal PDZ-binding motif DTHL); the interaction take place early in the secretory pathway and is necessary for its apical membrane sorting (By similarity). Interacts with SLC26A3 (By similarity). Interacts with MCC. Interacts with SLC34A1. Interacts (via the PDZ domains) with SLC26A6 isoform 4 and isoform 5 (By similarity). Interacts (via PDZ domains) with ACE2 (via PDZ-binding motif); the interaction may enhance ACE2 membrane residence (By similarity).</text>
</comment>
<comment type="subcellular location">
    <subcellularLocation>
        <location evidence="1">Cytoplasm</location>
    </subcellularLocation>
    <subcellularLocation>
        <location evidence="1">Apical cell membrane</location>
    </subcellularLocation>
    <subcellularLocation>
        <location evidence="1">Endomembrane system</location>
        <topology evidence="1">Peripheral membrane protein</topology>
    </subcellularLocation>
    <subcellularLocation>
        <location evidence="1">Cell projection</location>
        <location evidence="1">Filopodium</location>
    </subcellularLocation>
    <subcellularLocation>
        <location evidence="1">Cell projection</location>
        <location evidence="1">Ruffle</location>
    </subcellularLocation>
    <subcellularLocation>
        <location evidence="1">Cell projection</location>
        <location evidence="1">Microvillus</location>
    </subcellularLocation>
    <text evidence="1">Translocates from the cytoplasm to the apical cell membrane in a PODXL-dependent manner. Colocalizes with actin in microvilli-rich apical regions of the syncytiotrophoblast. Present in lipid rafts of T-cells. Colocalizes with CFTR at the midpiece of sperm tail (By similarity).</text>
</comment>
<comment type="PTM">
    <text evidence="1">Phosphorylated on serine residues.</text>
</comment>
<dbReference type="EMBL" id="AB169219">
    <property type="protein sequence ID" value="BAE01311.1"/>
    <property type="molecule type" value="mRNA"/>
</dbReference>
<dbReference type="RefSeq" id="NP_001272109.1">
    <property type="nucleotide sequence ID" value="NM_001285180.1"/>
</dbReference>
<dbReference type="RefSeq" id="XP_045232683.1">
    <property type="nucleotide sequence ID" value="XM_045376748.2"/>
</dbReference>
<dbReference type="SMR" id="Q4R6G4"/>
<dbReference type="STRING" id="9541.ENSMFAP00000024594"/>
<dbReference type="GeneID" id="101926883"/>
<dbReference type="VEuPathDB" id="HostDB:ENSMFAG00000043867"/>
<dbReference type="eggNOG" id="KOG3528">
    <property type="taxonomic scope" value="Eukaryota"/>
</dbReference>
<dbReference type="OMA" id="KHNMKCL"/>
<dbReference type="Proteomes" id="UP000233100">
    <property type="component" value="Chromosome 16"/>
</dbReference>
<dbReference type="GO" id="GO:0016324">
    <property type="term" value="C:apical plasma membrane"/>
    <property type="evidence" value="ECO:0007669"/>
    <property type="project" value="UniProtKB-SubCell"/>
</dbReference>
<dbReference type="GO" id="GO:0071944">
    <property type="term" value="C:cell periphery"/>
    <property type="evidence" value="ECO:0000250"/>
    <property type="project" value="UniProtKB"/>
</dbReference>
<dbReference type="GO" id="GO:0005737">
    <property type="term" value="C:cytoplasm"/>
    <property type="evidence" value="ECO:0000250"/>
    <property type="project" value="UniProtKB"/>
</dbReference>
<dbReference type="GO" id="GO:0012505">
    <property type="term" value="C:endomembrane system"/>
    <property type="evidence" value="ECO:0007669"/>
    <property type="project" value="UniProtKB-SubCell"/>
</dbReference>
<dbReference type="GO" id="GO:0030175">
    <property type="term" value="C:filopodium"/>
    <property type="evidence" value="ECO:0007669"/>
    <property type="project" value="UniProtKB-SubCell"/>
</dbReference>
<dbReference type="GO" id="GO:0016020">
    <property type="term" value="C:membrane"/>
    <property type="evidence" value="ECO:0000250"/>
    <property type="project" value="UniProtKB"/>
</dbReference>
<dbReference type="GO" id="GO:0005902">
    <property type="term" value="C:microvillus"/>
    <property type="evidence" value="ECO:0000250"/>
    <property type="project" value="UniProtKB"/>
</dbReference>
<dbReference type="GO" id="GO:0031528">
    <property type="term" value="C:microvillus membrane"/>
    <property type="evidence" value="ECO:0000250"/>
    <property type="project" value="UniProtKB"/>
</dbReference>
<dbReference type="GO" id="GO:0001726">
    <property type="term" value="C:ruffle"/>
    <property type="evidence" value="ECO:0007669"/>
    <property type="project" value="UniProtKB-SubCell"/>
</dbReference>
<dbReference type="GO" id="GO:0097225">
    <property type="term" value="C:sperm midpiece"/>
    <property type="evidence" value="ECO:0000250"/>
    <property type="project" value="UniProtKB"/>
</dbReference>
<dbReference type="GO" id="GO:0017081">
    <property type="term" value="F:chloride channel regulator activity"/>
    <property type="evidence" value="ECO:0000250"/>
    <property type="project" value="UniProtKB"/>
</dbReference>
<dbReference type="GO" id="GO:0043495">
    <property type="term" value="F:protein-membrane adaptor activity"/>
    <property type="evidence" value="ECO:0007669"/>
    <property type="project" value="TreeGrafter"/>
</dbReference>
<dbReference type="GO" id="GO:0005102">
    <property type="term" value="F:signaling receptor binding"/>
    <property type="evidence" value="ECO:0007669"/>
    <property type="project" value="TreeGrafter"/>
</dbReference>
<dbReference type="GO" id="GO:0032782">
    <property type="term" value="P:bile acid secretion"/>
    <property type="evidence" value="ECO:0000250"/>
    <property type="project" value="UniProtKB"/>
</dbReference>
<dbReference type="GO" id="GO:0034635">
    <property type="term" value="P:glutathione transport"/>
    <property type="evidence" value="ECO:0000250"/>
    <property type="project" value="UniProtKB"/>
</dbReference>
<dbReference type="GO" id="GO:2000146">
    <property type="term" value="P:negative regulation of cell motility"/>
    <property type="evidence" value="ECO:0000250"/>
    <property type="project" value="UniProtKB"/>
</dbReference>
<dbReference type="GO" id="GO:0051898">
    <property type="term" value="P:negative regulation of phosphatidylinositol 3-kinase/protein kinase B signal transduction"/>
    <property type="evidence" value="ECO:0000250"/>
    <property type="project" value="UniProtKB"/>
</dbReference>
<dbReference type="GO" id="GO:0010642">
    <property type="term" value="P:negative regulation of platelet-derived growth factor receptor signaling pathway"/>
    <property type="evidence" value="ECO:0000250"/>
    <property type="project" value="UniProtKB"/>
</dbReference>
<dbReference type="GO" id="GO:0072659">
    <property type="term" value="P:protein localization to plasma membrane"/>
    <property type="evidence" value="ECO:0007669"/>
    <property type="project" value="TreeGrafter"/>
</dbReference>
<dbReference type="GO" id="GO:0045859">
    <property type="term" value="P:regulation of protein kinase activity"/>
    <property type="evidence" value="ECO:0000250"/>
    <property type="project" value="UniProtKB"/>
</dbReference>
<dbReference type="GO" id="GO:0070293">
    <property type="term" value="P:renal absorption"/>
    <property type="evidence" value="ECO:0000250"/>
    <property type="project" value="UniProtKB"/>
</dbReference>
<dbReference type="GO" id="GO:0097291">
    <property type="term" value="P:renal phosphate ion absorption"/>
    <property type="evidence" value="ECO:0000250"/>
    <property type="project" value="UniProtKB"/>
</dbReference>
<dbReference type="GO" id="GO:0016055">
    <property type="term" value="P:Wnt signaling pathway"/>
    <property type="evidence" value="ECO:0007669"/>
    <property type="project" value="UniProtKB-KW"/>
</dbReference>
<dbReference type="CDD" id="cd06768">
    <property type="entry name" value="PDZ_NHERF-like"/>
    <property type="match status" value="2"/>
</dbReference>
<dbReference type="FunFam" id="2.30.42.10:FF:000068">
    <property type="entry name" value="Na(+)/H(+) exchange regulatory cofactor NHE-RF"/>
    <property type="match status" value="2"/>
</dbReference>
<dbReference type="Gene3D" id="2.30.42.10">
    <property type="match status" value="2"/>
</dbReference>
<dbReference type="InterPro" id="IPR015098">
    <property type="entry name" value="EBP50_C"/>
</dbReference>
<dbReference type="InterPro" id="IPR051067">
    <property type="entry name" value="NHER"/>
</dbReference>
<dbReference type="InterPro" id="IPR017300">
    <property type="entry name" value="NHERF-1/NHERF-2"/>
</dbReference>
<dbReference type="InterPro" id="IPR001478">
    <property type="entry name" value="PDZ"/>
</dbReference>
<dbReference type="InterPro" id="IPR036034">
    <property type="entry name" value="PDZ_sf"/>
</dbReference>
<dbReference type="PANTHER" id="PTHR14191:SF7">
    <property type="entry name" value="NA(+)_H(+) EXCHANGE REGULATORY COFACTOR NHE-RF1"/>
    <property type="match status" value="1"/>
</dbReference>
<dbReference type="PANTHER" id="PTHR14191">
    <property type="entry name" value="PDZ DOMAIN CONTAINING PROTEIN"/>
    <property type="match status" value="1"/>
</dbReference>
<dbReference type="Pfam" id="PF09007">
    <property type="entry name" value="EBP50_C"/>
    <property type="match status" value="1"/>
</dbReference>
<dbReference type="Pfam" id="PF00595">
    <property type="entry name" value="PDZ"/>
    <property type="match status" value="2"/>
</dbReference>
<dbReference type="PIRSF" id="PIRSF037866">
    <property type="entry name" value="EBP50"/>
    <property type="match status" value="1"/>
</dbReference>
<dbReference type="SMART" id="SM00228">
    <property type="entry name" value="PDZ"/>
    <property type="match status" value="2"/>
</dbReference>
<dbReference type="SUPFAM" id="SSF50156">
    <property type="entry name" value="PDZ domain-like"/>
    <property type="match status" value="2"/>
</dbReference>
<dbReference type="PROSITE" id="PS50106">
    <property type="entry name" value="PDZ"/>
    <property type="match status" value="2"/>
</dbReference>
<accession>Q4R6G4</accession>
<keyword id="KW-0007">Acetylation</keyword>
<keyword id="KW-1003">Cell membrane</keyword>
<keyword id="KW-0966">Cell projection</keyword>
<keyword id="KW-0963">Cytoplasm</keyword>
<keyword id="KW-0472">Membrane</keyword>
<keyword id="KW-0597">Phosphoprotein</keyword>
<keyword id="KW-1185">Reference proteome</keyword>
<keyword id="KW-0677">Repeat</keyword>
<keyword id="KW-0879">Wnt signaling pathway</keyword>
<proteinExistence type="evidence at transcript level"/>
<protein>
    <recommendedName>
        <fullName>Na(+)/H(+) exchange regulatory cofactor NHE-RF1</fullName>
        <shortName>NHERF-1</shortName>
    </recommendedName>
    <alternativeName>
        <fullName>Ezrin-radixin-moesin-binding phosphoprotein 50</fullName>
        <shortName>EBP50</shortName>
    </alternativeName>
    <alternativeName>
        <fullName>Regulatory cofactor of Na(+)/H(+) exchanger</fullName>
    </alternativeName>
    <alternativeName>
        <fullName>Sodium-hydrogen exchanger regulatory factor 1</fullName>
    </alternativeName>
    <alternativeName>
        <fullName>Solute carrier family 9 isoform A3 regulatory factor 1</fullName>
    </alternativeName>
</protein>